<proteinExistence type="inferred from homology"/>
<name>LFTR_SHIFL</name>
<protein>
    <recommendedName>
        <fullName>Leucyl/phenylalanyl-tRNA--protein transferase</fullName>
        <ecNumber>2.3.2.6</ecNumber>
    </recommendedName>
    <alternativeName>
        <fullName>L/F-transferase</fullName>
    </alternativeName>
    <alternativeName>
        <fullName>Leucyltransferase</fullName>
    </alternativeName>
    <alternativeName>
        <fullName>Phenyalanyltransferase</fullName>
    </alternativeName>
</protein>
<feature type="chain" id="PRO_0000207244" description="Leucyl/phenylalanyl-tRNA--protein transferase">
    <location>
        <begin position="1"/>
        <end position="234"/>
    </location>
</feature>
<keyword id="KW-0012">Acyltransferase</keyword>
<keyword id="KW-0963">Cytoplasm</keyword>
<keyword id="KW-1185">Reference proteome</keyword>
<keyword id="KW-0808">Transferase</keyword>
<accession>P0A8P2</accession>
<accession>P23885</accession>
<organism>
    <name type="scientific">Shigella flexneri</name>
    <dbReference type="NCBI Taxonomy" id="623"/>
    <lineage>
        <taxon>Bacteria</taxon>
        <taxon>Pseudomonadati</taxon>
        <taxon>Pseudomonadota</taxon>
        <taxon>Gammaproteobacteria</taxon>
        <taxon>Enterobacterales</taxon>
        <taxon>Enterobacteriaceae</taxon>
        <taxon>Shigella</taxon>
    </lineage>
</organism>
<gene>
    <name type="primary">aat</name>
    <name type="ordered locus">SF0844</name>
    <name type="ordered locus">S0885</name>
</gene>
<comment type="function">
    <text evidence="1">Functions in the N-end rule pathway of protein degradation where it conjugates Leu, Phe and, less efficiently, Met from aminoacyl-tRNAs to the N-termini of proteins containing an N-terminal arginine or lysine.</text>
</comment>
<comment type="catalytic activity">
    <reaction>
        <text>N-terminal L-lysyl-[protein] + L-leucyl-tRNA(Leu) = N-terminal L-leucyl-L-lysyl-[protein] + tRNA(Leu) + H(+)</text>
        <dbReference type="Rhea" id="RHEA:12340"/>
        <dbReference type="Rhea" id="RHEA-COMP:9613"/>
        <dbReference type="Rhea" id="RHEA-COMP:9622"/>
        <dbReference type="Rhea" id="RHEA-COMP:12670"/>
        <dbReference type="Rhea" id="RHEA-COMP:12671"/>
        <dbReference type="ChEBI" id="CHEBI:15378"/>
        <dbReference type="ChEBI" id="CHEBI:65249"/>
        <dbReference type="ChEBI" id="CHEBI:78442"/>
        <dbReference type="ChEBI" id="CHEBI:78494"/>
        <dbReference type="ChEBI" id="CHEBI:133043"/>
        <dbReference type="EC" id="2.3.2.6"/>
    </reaction>
</comment>
<comment type="catalytic activity">
    <reaction>
        <text>N-terminal L-arginyl-[protein] + L-leucyl-tRNA(Leu) = N-terminal L-leucyl-L-arginyl-[protein] + tRNA(Leu) + H(+)</text>
        <dbReference type="Rhea" id="RHEA:50416"/>
        <dbReference type="Rhea" id="RHEA-COMP:9613"/>
        <dbReference type="Rhea" id="RHEA-COMP:9622"/>
        <dbReference type="Rhea" id="RHEA-COMP:12672"/>
        <dbReference type="Rhea" id="RHEA-COMP:12673"/>
        <dbReference type="ChEBI" id="CHEBI:15378"/>
        <dbReference type="ChEBI" id="CHEBI:64719"/>
        <dbReference type="ChEBI" id="CHEBI:78442"/>
        <dbReference type="ChEBI" id="CHEBI:78494"/>
        <dbReference type="ChEBI" id="CHEBI:133044"/>
        <dbReference type="EC" id="2.3.2.6"/>
    </reaction>
</comment>
<comment type="catalytic activity">
    <reaction>
        <text>L-phenylalanyl-tRNA(Phe) + an N-terminal L-alpha-aminoacyl-[protein] = an N-terminal L-phenylalanyl-L-alpha-aminoacyl-[protein] + tRNA(Phe)</text>
        <dbReference type="Rhea" id="RHEA:43632"/>
        <dbReference type="Rhea" id="RHEA-COMP:9668"/>
        <dbReference type="Rhea" id="RHEA-COMP:9699"/>
        <dbReference type="Rhea" id="RHEA-COMP:10636"/>
        <dbReference type="Rhea" id="RHEA-COMP:10637"/>
        <dbReference type="ChEBI" id="CHEBI:78442"/>
        <dbReference type="ChEBI" id="CHEBI:78531"/>
        <dbReference type="ChEBI" id="CHEBI:78597"/>
        <dbReference type="ChEBI" id="CHEBI:83561"/>
        <dbReference type="EC" id="2.3.2.6"/>
    </reaction>
</comment>
<comment type="subunit">
    <text evidence="1">Monomer.</text>
</comment>
<comment type="subcellular location">
    <subcellularLocation>
        <location evidence="1">Cytoplasm</location>
    </subcellularLocation>
</comment>
<comment type="similarity">
    <text evidence="2">Belongs to the L/F-transferase family.</text>
</comment>
<reference key="1">
    <citation type="journal article" date="2002" name="Nucleic Acids Res.">
        <title>Genome sequence of Shigella flexneri 2a: insights into pathogenicity through comparison with genomes of Escherichia coli K12 and O157.</title>
        <authorList>
            <person name="Jin Q."/>
            <person name="Yuan Z."/>
            <person name="Xu J."/>
            <person name="Wang Y."/>
            <person name="Shen Y."/>
            <person name="Lu W."/>
            <person name="Wang J."/>
            <person name="Liu H."/>
            <person name="Yang J."/>
            <person name="Yang F."/>
            <person name="Zhang X."/>
            <person name="Zhang J."/>
            <person name="Yang G."/>
            <person name="Wu H."/>
            <person name="Qu D."/>
            <person name="Dong J."/>
            <person name="Sun L."/>
            <person name="Xue Y."/>
            <person name="Zhao A."/>
            <person name="Gao Y."/>
            <person name="Zhu J."/>
            <person name="Kan B."/>
            <person name="Ding K."/>
            <person name="Chen S."/>
            <person name="Cheng H."/>
            <person name="Yao Z."/>
            <person name="He B."/>
            <person name="Chen R."/>
            <person name="Ma D."/>
            <person name="Qiang B."/>
            <person name="Wen Y."/>
            <person name="Hou Y."/>
            <person name="Yu J."/>
        </authorList>
    </citation>
    <scope>NUCLEOTIDE SEQUENCE [LARGE SCALE GENOMIC DNA]</scope>
    <source>
        <strain>301 / Serotype 2a</strain>
    </source>
</reference>
<reference key="2">
    <citation type="journal article" date="2003" name="Infect. Immun.">
        <title>Complete genome sequence and comparative genomics of Shigella flexneri serotype 2a strain 2457T.</title>
        <authorList>
            <person name="Wei J."/>
            <person name="Goldberg M.B."/>
            <person name="Burland V."/>
            <person name="Venkatesan M.M."/>
            <person name="Deng W."/>
            <person name="Fournier G."/>
            <person name="Mayhew G.F."/>
            <person name="Plunkett G. III"/>
            <person name="Rose D.J."/>
            <person name="Darling A."/>
            <person name="Mau B."/>
            <person name="Perna N.T."/>
            <person name="Payne S.M."/>
            <person name="Runyen-Janecky L.J."/>
            <person name="Zhou S."/>
            <person name="Schwartz D.C."/>
            <person name="Blattner F.R."/>
        </authorList>
    </citation>
    <scope>NUCLEOTIDE SEQUENCE [LARGE SCALE GENOMIC DNA]</scope>
    <source>
        <strain>ATCC 700930 / 2457T / Serotype 2a</strain>
    </source>
</reference>
<sequence>MRLVQLSRHSIAFPSPEGALREPNGLLALGGDLSPARLLMAYQRGIFPWFSPGDPILWWSPDPRAVLWPESLHISRSMKRFHKRSPYRVTMNYAFGQVIEGCASDREEGTWITRGVVEAYHRLHELGHAHSIEVWREDELVGGMYGVAQGTLFCGESMFSRMENASKTALLVFCEEFIGHGGKLIDCQVLNDHTASLGACEIPRRDYLNYLNQMRLGRLPNNFWVPRCLFSPQE</sequence>
<evidence type="ECO:0000250" key="1"/>
<evidence type="ECO:0000305" key="2"/>
<dbReference type="EC" id="2.3.2.6"/>
<dbReference type="EMBL" id="AE005674">
    <property type="protein sequence ID" value="AAN42477.1"/>
    <property type="molecule type" value="Genomic_DNA"/>
</dbReference>
<dbReference type="EMBL" id="AE014073">
    <property type="protein sequence ID" value="AAP16349.1"/>
    <property type="molecule type" value="Genomic_DNA"/>
</dbReference>
<dbReference type="RefSeq" id="NP_706770.1">
    <property type="nucleotide sequence ID" value="NC_004337.2"/>
</dbReference>
<dbReference type="RefSeq" id="WP_001241678.1">
    <property type="nucleotide sequence ID" value="NZ_WPGW01000037.1"/>
</dbReference>
<dbReference type="SMR" id="P0A8P2"/>
<dbReference type="STRING" id="198214.SF0844"/>
<dbReference type="PaxDb" id="198214-SF0844"/>
<dbReference type="GeneID" id="1023814"/>
<dbReference type="GeneID" id="75206174"/>
<dbReference type="KEGG" id="sfl:SF0844"/>
<dbReference type="KEGG" id="sfx:S0885"/>
<dbReference type="PATRIC" id="fig|198214.7.peg.973"/>
<dbReference type="HOGENOM" id="CLU_075045_0_0_6"/>
<dbReference type="Proteomes" id="UP000001006">
    <property type="component" value="Chromosome"/>
</dbReference>
<dbReference type="Proteomes" id="UP000002673">
    <property type="component" value="Chromosome"/>
</dbReference>
<dbReference type="GO" id="GO:0005737">
    <property type="term" value="C:cytoplasm"/>
    <property type="evidence" value="ECO:0007669"/>
    <property type="project" value="UniProtKB-SubCell"/>
</dbReference>
<dbReference type="GO" id="GO:0008914">
    <property type="term" value="F:leucyl-tRNA--protein transferase activity"/>
    <property type="evidence" value="ECO:0007669"/>
    <property type="project" value="UniProtKB-UniRule"/>
</dbReference>
<dbReference type="GO" id="GO:0030163">
    <property type="term" value="P:protein catabolic process"/>
    <property type="evidence" value="ECO:0007669"/>
    <property type="project" value="UniProtKB-UniRule"/>
</dbReference>
<dbReference type="FunFam" id="3.30.70.3550:FF:000001">
    <property type="entry name" value="Leucyl/phenylalanyl-tRNA--protein transferase"/>
    <property type="match status" value="1"/>
</dbReference>
<dbReference type="FunFam" id="3.40.630.70:FF:000001">
    <property type="entry name" value="Leucyl/phenylalanyl-tRNA--protein transferase"/>
    <property type="match status" value="1"/>
</dbReference>
<dbReference type="Gene3D" id="3.40.630.70">
    <property type="entry name" value="Leucyl/phenylalanyl-tRNA-protein transferase, C-terminal domain"/>
    <property type="match status" value="1"/>
</dbReference>
<dbReference type="Gene3D" id="3.30.70.3550">
    <property type="entry name" value="Leucyl/phenylalanyl-tRNA-protein transferase, N-terminal domain"/>
    <property type="match status" value="1"/>
</dbReference>
<dbReference type="HAMAP" id="MF_00688">
    <property type="entry name" value="Leu_Phe_trans"/>
    <property type="match status" value="1"/>
</dbReference>
<dbReference type="InterPro" id="IPR016181">
    <property type="entry name" value="Acyl_CoA_acyltransferase"/>
</dbReference>
<dbReference type="InterPro" id="IPR004616">
    <property type="entry name" value="Leu/Phe-tRNA_Trfase"/>
</dbReference>
<dbReference type="InterPro" id="IPR042203">
    <property type="entry name" value="Leu/Phe-tRNA_Trfase_C"/>
</dbReference>
<dbReference type="InterPro" id="IPR042221">
    <property type="entry name" value="Leu/Phe-tRNA_Trfase_N"/>
</dbReference>
<dbReference type="NCBIfam" id="TIGR00667">
    <property type="entry name" value="aat"/>
    <property type="match status" value="1"/>
</dbReference>
<dbReference type="PANTHER" id="PTHR30098">
    <property type="entry name" value="LEUCYL/PHENYLALANYL-TRNA--PROTEIN TRANSFERASE"/>
    <property type="match status" value="1"/>
</dbReference>
<dbReference type="PANTHER" id="PTHR30098:SF2">
    <property type="entry name" value="LEUCYL_PHENYLALANYL-TRNA--PROTEIN TRANSFERASE"/>
    <property type="match status" value="1"/>
</dbReference>
<dbReference type="Pfam" id="PF03588">
    <property type="entry name" value="Leu_Phe_trans"/>
    <property type="match status" value="1"/>
</dbReference>
<dbReference type="SUPFAM" id="SSF55729">
    <property type="entry name" value="Acyl-CoA N-acyltransferases (Nat)"/>
    <property type="match status" value="1"/>
</dbReference>